<name>RS19_LOWBP</name>
<keyword id="KW-0687">Ribonucleoprotein</keyword>
<keyword id="KW-0689">Ribosomal protein</keyword>
<keyword id="KW-0694">RNA-binding</keyword>
<keyword id="KW-0699">rRNA-binding</keyword>
<dbReference type="EMBL" id="L27027">
    <property type="protein sequence ID" value="AAA83944.1"/>
    <property type="molecule type" value="Genomic_DNA"/>
</dbReference>
<dbReference type="GO" id="GO:1990904">
    <property type="term" value="C:ribonucleoprotein complex"/>
    <property type="evidence" value="ECO:0007669"/>
    <property type="project" value="UniProtKB-KW"/>
</dbReference>
<dbReference type="GO" id="GO:0005840">
    <property type="term" value="C:ribosome"/>
    <property type="evidence" value="ECO:0007669"/>
    <property type="project" value="UniProtKB-KW"/>
</dbReference>
<dbReference type="GO" id="GO:0019843">
    <property type="term" value="F:rRNA binding"/>
    <property type="evidence" value="ECO:0007669"/>
    <property type="project" value="UniProtKB-KW"/>
</dbReference>
<sequence length="14" mass="1642">FRGHAKGDKKNQKK</sequence>
<comment type="function">
    <text evidence="1">Protein S19 forms a complex with S13 that binds strongly to the 16S ribosomal RNA.</text>
</comment>
<comment type="similarity">
    <text evidence="2">Belongs to the universal ribosomal protein uS19 family.</text>
</comment>
<feature type="chain" id="PRO_0000129847" description="Small ribosomal subunit protein uS19">
    <location>
        <begin position="1" status="less than"/>
        <end position="14"/>
    </location>
</feature>
<feature type="non-terminal residue">
    <location>
        <position position="1"/>
    </location>
</feature>
<reference key="1">
    <citation type="journal article" date="1994" name="J. Bacteriol.">
        <title>Phylogeny of mycoplasmalike organisms (phytoplasmas): a basis for their classification.</title>
        <authorList>
            <person name="Gundersen D.E."/>
            <person name="Lee I.M."/>
            <person name="Rehner S.A."/>
            <person name="Davis R.E."/>
            <person name="Kingsbury D.T."/>
        </authorList>
    </citation>
    <scope>NUCLEOTIDE SEQUENCE [GENOMIC DNA]</scope>
</reference>
<proteinExistence type="inferred from homology"/>
<protein>
    <recommendedName>
        <fullName evidence="2">Small ribosomal subunit protein uS19</fullName>
    </recommendedName>
    <alternativeName>
        <fullName>30S ribosomal protein S19</fullName>
    </alternativeName>
</protein>
<evidence type="ECO:0000250" key="1"/>
<evidence type="ECO:0000305" key="2"/>
<organism>
    <name type="scientific">Loofah witches'-broom phytoplasma</name>
    <dbReference type="NCBI Taxonomy" id="35773"/>
    <lineage>
        <taxon>Bacteria</taxon>
        <taxon>Bacillati</taxon>
        <taxon>Mycoplasmatota</taxon>
        <taxon>Mollicutes</taxon>
        <taxon>Acholeplasmatales</taxon>
        <taxon>Acholeplasmataceae</taxon>
        <taxon>Candidatus Phytoplasma</taxon>
        <taxon>16SrVIII (Loofah witches'-broom group)</taxon>
    </lineage>
</organism>
<gene>
    <name type="primary">rpsS</name>
    <name type="synonym">rps19</name>
</gene>
<accession>Q48878</accession>